<reference key="1">
    <citation type="submission" date="2007-10" db="EMBL/GenBank/DDBJ databases">
        <title>Complete sequence of Methanococcus maripaludis C6.</title>
        <authorList>
            <consortium name="US DOE Joint Genome Institute"/>
            <person name="Copeland A."/>
            <person name="Lucas S."/>
            <person name="Lapidus A."/>
            <person name="Barry K."/>
            <person name="Glavina del Rio T."/>
            <person name="Dalin E."/>
            <person name="Tice H."/>
            <person name="Pitluck S."/>
            <person name="Clum A."/>
            <person name="Schmutz J."/>
            <person name="Larimer F."/>
            <person name="Land M."/>
            <person name="Hauser L."/>
            <person name="Kyrpides N."/>
            <person name="Mikhailova N."/>
            <person name="Sieprawska-Lupa M."/>
            <person name="Whitman W.B."/>
            <person name="Richardson P."/>
        </authorList>
    </citation>
    <scope>NUCLEOTIDE SEQUENCE [LARGE SCALE GENOMIC DNA]</scope>
    <source>
        <strain>C6 / ATCC BAA-1332</strain>
    </source>
</reference>
<sequence length="148" mass="16688">MKMELKVKPIENGTVIDHISGSKALKVYKILNIEEKLPITLALNVPSKKGVMKDILKIEGLELTRDDVNKIALISPDATINIIKEGIVIKKFKVNLPKRIDGIIKCTNPNCITNKENIEGKFSIEQKNTLKIRCEYCEKFINSIIISK</sequence>
<comment type="function">
    <text evidence="1">Involved in allosteric regulation of aspartate carbamoyltransferase.</text>
</comment>
<comment type="cofactor">
    <cofactor evidence="1">
        <name>Zn(2+)</name>
        <dbReference type="ChEBI" id="CHEBI:29105"/>
    </cofactor>
    <text evidence="1">Binds 1 zinc ion per subunit.</text>
</comment>
<comment type="subunit">
    <text evidence="1">Contains catalytic and regulatory chains.</text>
</comment>
<comment type="similarity">
    <text evidence="1">Belongs to the PyrI family.</text>
</comment>
<feature type="chain" id="PRO_1000088828" description="Aspartate carbamoyltransferase regulatory chain">
    <location>
        <begin position="1"/>
        <end position="148"/>
    </location>
</feature>
<feature type="binding site" evidence="1">
    <location>
        <position position="106"/>
    </location>
    <ligand>
        <name>Zn(2+)</name>
        <dbReference type="ChEBI" id="CHEBI:29105"/>
    </ligand>
</feature>
<feature type="binding site" evidence="1">
    <location>
        <position position="111"/>
    </location>
    <ligand>
        <name>Zn(2+)</name>
        <dbReference type="ChEBI" id="CHEBI:29105"/>
    </ligand>
</feature>
<feature type="binding site" evidence="1">
    <location>
        <position position="134"/>
    </location>
    <ligand>
        <name>Zn(2+)</name>
        <dbReference type="ChEBI" id="CHEBI:29105"/>
    </ligand>
</feature>
<feature type="binding site" evidence="1">
    <location>
        <position position="137"/>
    </location>
    <ligand>
        <name>Zn(2+)</name>
        <dbReference type="ChEBI" id="CHEBI:29105"/>
    </ligand>
</feature>
<protein>
    <recommendedName>
        <fullName evidence="1">Aspartate carbamoyltransferase regulatory chain</fullName>
    </recommendedName>
</protein>
<name>PYRI_METM6</name>
<proteinExistence type="inferred from homology"/>
<gene>
    <name evidence="1" type="primary">pyrI</name>
    <name type="ordered locus">MmarC6_1563</name>
</gene>
<dbReference type="EMBL" id="CP000867">
    <property type="protein sequence ID" value="ABX02375.1"/>
    <property type="molecule type" value="Genomic_DNA"/>
</dbReference>
<dbReference type="SMR" id="A9AAK2"/>
<dbReference type="STRING" id="444158.MmarC6_1563"/>
<dbReference type="KEGG" id="mmx:MmarC6_1563"/>
<dbReference type="eggNOG" id="arCOG04229">
    <property type="taxonomic scope" value="Archaea"/>
</dbReference>
<dbReference type="HOGENOM" id="CLU_128576_0_0_2"/>
<dbReference type="OrthoDB" id="7000at2157"/>
<dbReference type="PhylomeDB" id="A9AAK2"/>
<dbReference type="GO" id="GO:0009347">
    <property type="term" value="C:aspartate carbamoyltransferase complex"/>
    <property type="evidence" value="ECO:0007669"/>
    <property type="project" value="InterPro"/>
</dbReference>
<dbReference type="GO" id="GO:0046872">
    <property type="term" value="F:metal ion binding"/>
    <property type="evidence" value="ECO:0007669"/>
    <property type="project" value="UniProtKB-KW"/>
</dbReference>
<dbReference type="GO" id="GO:0006207">
    <property type="term" value="P:'de novo' pyrimidine nucleobase biosynthetic process"/>
    <property type="evidence" value="ECO:0007669"/>
    <property type="project" value="InterPro"/>
</dbReference>
<dbReference type="GO" id="GO:0006221">
    <property type="term" value="P:pyrimidine nucleotide biosynthetic process"/>
    <property type="evidence" value="ECO:0007669"/>
    <property type="project" value="UniProtKB-UniRule"/>
</dbReference>
<dbReference type="Gene3D" id="2.30.30.20">
    <property type="entry name" value="Aspartate carbamoyltransferase regulatory subunit, C-terminal domain"/>
    <property type="match status" value="1"/>
</dbReference>
<dbReference type="Gene3D" id="3.30.70.140">
    <property type="entry name" value="Aspartate carbamoyltransferase regulatory subunit, N-terminal domain"/>
    <property type="match status" value="1"/>
</dbReference>
<dbReference type="HAMAP" id="MF_00002">
    <property type="entry name" value="Asp_carb_tr_reg"/>
    <property type="match status" value="1"/>
</dbReference>
<dbReference type="InterPro" id="IPR020545">
    <property type="entry name" value="Asp_carbamoyltransf_reg_N"/>
</dbReference>
<dbReference type="InterPro" id="IPR002801">
    <property type="entry name" value="Asp_carbamoylTrfase_reg"/>
</dbReference>
<dbReference type="InterPro" id="IPR020542">
    <property type="entry name" value="Asp_carbamoyltrfase_reg_C"/>
</dbReference>
<dbReference type="InterPro" id="IPR036792">
    <property type="entry name" value="Asp_carbatrfase_reg_C_sf"/>
</dbReference>
<dbReference type="InterPro" id="IPR036793">
    <property type="entry name" value="Asp_carbatrfase_reg_N_sf"/>
</dbReference>
<dbReference type="NCBIfam" id="TIGR00240">
    <property type="entry name" value="ATCase_reg"/>
    <property type="match status" value="1"/>
</dbReference>
<dbReference type="PANTHER" id="PTHR35805">
    <property type="entry name" value="ASPARTATE CARBAMOYLTRANSFERASE REGULATORY CHAIN"/>
    <property type="match status" value="1"/>
</dbReference>
<dbReference type="PANTHER" id="PTHR35805:SF1">
    <property type="entry name" value="ASPARTATE CARBAMOYLTRANSFERASE REGULATORY CHAIN"/>
    <property type="match status" value="1"/>
</dbReference>
<dbReference type="Pfam" id="PF01948">
    <property type="entry name" value="PyrI"/>
    <property type="match status" value="1"/>
</dbReference>
<dbReference type="Pfam" id="PF02748">
    <property type="entry name" value="PyrI_C"/>
    <property type="match status" value="1"/>
</dbReference>
<dbReference type="SUPFAM" id="SSF57825">
    <property type="entry name" value="Aspartate carbamoyltransferase, Regulatory-chain, C-terminal domain"/>
    <property type="match status" value="1"/>
</dbReference>
<dbReference type="SUPFAM" id="SSF54893">
    <property type="entry name" value="Aspartate carbamoyltransferase, Regulatory-chain, N-terminal domain"/>
    <property type="match status" value="1"/>
</dbReference>
<evidence type="ECO:0000255" key="1">
    <source>
        <dbReference type="HAMAP-Rule" id="MF_00002"/>
    </source>
</evidence>
<accession>A9AAK2</accession>
<keyword id="KW-0479">Metal-binding</keyword>
<keyword id="KW-0665">Pyrimidine biosynthesis</keyword>
<keyword id="KW-0862">Zinc</keyword>
<organism>
    <name type="scientific">Methanococcus maripaludis (strain C6 / ATCC BAA-1332)</name>
    <dbReference type="NCBI Taxonomy" id="444158"/>
    <lineage>
        <taxon>Archaea</taxon>
        <taxon>Methanobacteriati</taxon>
        <taxon>Methanobacteriota</taxon>
        <taxon>Methanomada group</taxon>
        <taxon>Methanococci</taxon>
        <taxon>Methanococcales</taxon>
        <taxon>Methanococcaceae</taxon>
        <taxon>Methanococcus</taxon>
    </lineage>
</organism>